<feature type="chain" id="PRO_0000213355" description="UDP-N-acetylglucosamine transporter">
    <location>
        <begin position="1"/>
        <end position="326"/>
    </location>
</feature>
<feature type="transmembrane region" description="Helical" evidence="2">
    <location>
        <begin position="4"/>
        <end position="24"/>
    </location>
</feature>
<feature type="transmembrane region" description="Helical" evidence="2">
    <location>
        <begin position="38"/>
        <end position="58"/>
    </location>
</feature>
<feature type="transmembrane region" description="Helical" evidence="2">
    <location>
        <begin position="136"/>
        <end position="156"/>
    </location>
</feature>
<feature type="transmembrane region" description="Helical" evidence="2">
    <location>
        <begin position="174"/>
        <end position="194"/>
    </location>
</feature>
<feature type="transmembrane region" description="Helical" evidence="2">
    <location>
        <begin position="212"/>
        <end position="232"/>
    </location>
</feature>
<feature type="transmembrane region" description="Helical" evidence="2">
    <location>
        <begin position="244"/>
        <end position="264"/>
    </location>
</feature>
<feature type="transmembrane region" description="Helical" evidence="2">
    <location>
        <begin position="269"/>
        <end position="289"/>
    </location>
</feature>
<feature type="transmembrane region" description="Helical" evidence="2">
    <location>
        <begin position="293"/>
        <end position="313"/>
    </location>
</feature>
<feature type="sequence variant" description="Found in CVM; Holstein cattle. Does not rescue defective transport of UDP-N-acetylglucosamine into Golgi lumen in SLC35A3-deficient cells." evidence="3">
    <original>V</original>
    <variation>F</variation>
    <location>
        <position position="180"/>
    </location>
</feature>
<protein>
    <recommendedName>
        <fullName>UDP-N-acetylglucosamine transporter</fullName>
    </recommendedName>
    <alternativeName>
        <fullName>Golgi UDP-GlcNAc transporter</fullName>
    </alternativeName>
    <alternativeName>
        <fullName>Solute carrier family 35 member A3</fullName>
    </alternativeName>
</protein>
<proteinExistence type="evidence at protein level"/>
<sequence>MSANLKYLSLGILVFQTTSLVLTMRYSRTLKEEGPRYLSSTAVVVAELLKIMACILLVYKDSKCSLRALNRILHDEILNKPMETLKLAIPSGIYTLQNNLLYVALSNLDAATYQVTYQLKILTTALFSVSMLSKKLGVYQWLSLVILMTGVAFVQWPSDSQELNSKELSAGSQFVGLMAVLTACFSSGFAGVYFEKILKETKQSVWIRNIQLGFFGSIFGLMGVYVYDGELVSKNGFFQGYNRLTWIVVVLQALGGLVIAAVIKYADNILKGFATSLSIILSTLISYFWLQDFVPTSVFFLGAILVITATFLYGYDPKPAGNPTKA</sequence>
<accession>Q6YC49</accession>
<accession>A7Z022</accession>
<reference key="1">
    <citation type="journal article" date="2006" name="Genome Res.">
        <title>A missense mutation in the bovine SLC35A3 gene, encoding a UDP-N-acetylglucosamine transporter, causes complex vertebral malformation.</title>
        <authorList>
            <person name="Thomsen B."/>
            <person name="Horn P."/>
            <person name="Panitz F."/>
            <person name="Bendixen E."/>
            <person name="Petersen A.H."/>
            <person name="Holm L.E."/>
            <person name="Nielsen V.H."/>
            <person name="Agerholm J.S."/>
            <person name="Arnbjerg J."/>
            <person name="Bendixen C."/>
        </authorList>
    </citation>
    <scope>NUCLEOTIDE SEQUENCE [GENOMIC DNA]</scope>
    <scope>DISEASE</scope>
    <scope>VARIANT PHE-180</scope>
    <scope>FUNCTION</scope>
</reference>
<reference key="2">
    <citation type="submission" date="2007-09" db="EMBL/GenBank/DDBJ databases">
        <authorList>
            <consortium name="NIH - Mammalian Gene Collection (MGC) project"/>
        </authorList>
    </citation>
    <scope>NUCLEOTIDE SEQUENCE [LARGE SCALE MRNA]</scope>
    <source>
        <strain>Hereford</strain>
        <tissue>Hypothalamus</tissue>
    </source>
</reference>
<name>S35A3_BOVIN</name>
<keyword id="KW-0050">Antiport</keyword>
<keyword id="KW-0225">Disease variant</keyword>
<keyword id="KW-0333">Golgi apparatus</keyword>
<keyword id="KW-0472">Membrane</keyword>
<keyword id="KW-1185">Reference proteome</keyword>
<keyword id="KW-0762">Sugar transport</keyword>
<keyword id="KW-0812">Transmembrane</keyword>
<keyword id="KW-1133">Transmembrane helix</keyword>
<keyword id="KW-0813">Transport</keyword>
<organism>
    <name type="scientific">Bos taurus</name>
    <name type="common">Bovine</name>
    <dbReference type="NCBI Taxonomy" id="9913"/>
    <lineage>
        <taxon>Eukaryota</taxon>
        <taxon>Metazoa</taxon>
        <taxon>Chordata</taxon>
        <taxon>Craniata</taxon>
        <taxon>Vertebrata</taxon>
        <taxon>Euteleostomi</taxon>
        <taxon>Mammalia</taxon>
        <taxon>Eutheria</taxon>
        <taxon>Laurasiatheria</taxon>
        <taxon>Artiodactyla</taxon>
        <taxon>Ruminantia</taxon>
        <taxon>Pecora</taxon>
        <taxon>Bovidae</taxon>
        <taxon>Bovinae</taxon>
        <taxon>Bos</taxon>
    </lineage>
</organism>
<gene>
    <name type="primary">SLC35A3</name>
</gene>
<evidence type="ECO:0000250" key="1">
    <source>
        <dbReference type="UniProtKB" id="Q9Y2D2"/>
    </source>
</evidence>
<evidence type="ECO:0000255" key="2"/>
<evidence type="ECO:0000269" key="3">
    <source>
    </source>
</evidence>
<evidence type="ECO:0000305" key="4"/>
<dbReference type="EMBL" id="AY160683">
    <property type="protein sequence ID" value="AAO22138.1"/>
    <property type="molecule type" value="Genomic_DNA"/>
</dbReference>
<dbReference type="EMBL" id="BC153220">
    <property type="protein sequence ID" value="AAI53221.1"/>
    <property type="molecule type" value="mRNA"/>
</dbReference>
<dbReference type="RefSeq" id="NP_001098856.1">
    <property type="nucleotide sequence ID" value="NM_001105386.1"/>
</dbReference>
<dbReference type="RefSeq" id="XP_005204174.2">
    <property type="nucleotide sequence ID" value="XM_005204117.5"/>
</dbReference>
<dbReference type="RefSeq" id="XP_005204177.1">
    <property type="nucleotide sequence ID" value="XM_005204120.4"/>
</dbReference>
<dbReference type="RefSeq" id="XP_015319233.1">
    <property type="nucleotide sequence ID" value="XM_015463747.3"/>
</dbReference>
<dbReference type="SMR" id="Q6YC49"/>
<dbReference type="FunCoup" id="Q6YC49">
    <property type="interactions" value="1059"/>
</dbReference>
<dbReference type="STRING" id="9913.ENSBTAP00000067086"/>
<dbReference type="PaxDb" id="9913-ENSBTAP00000016519"/>
<dbReference type="GeneID" id="520918"/>
<dbReference type="KEGG" id="bta:520918"/>
<dbReference type="CTD" id="23443"/>
<dbReference type="VEuPathDB" id="HostDB:ENSBTAG00000012454"/>
<dbReference type="eggNOG" id="KOG2234">
    <property type="taxonomic scope" value="Eukaryota"/>
</dbReference>
<dbReference type="HOGENOM" id="CLU_024645_1_0_1"/>
<dbReference type="InParanoid" id="Q6YC49"/>
<dbReference type="OMA" id="AIMYVIQ"/>
<dbReference type="OrthoDB" id="408493at2759"/>
<dbReference type="TreeFam" id="TF315345"/>
<dbReference type="Reactome" id="R-BTA-727802">
    <property type="pathway name" value="Transport of nucleotide sugars"/>
</dbReference>
<dbReference type="Proteomes" id="UP000009136">
    <property type="component" value="Chromosome 3"/>
</dbReference>
<dbReference type="Bgee" id="ENSBTAG00000012454">
    <property type="expression patterns" value="Expressed in spiral colon and 109 other cell types or tissues"/>
</dbReference>
<dbReference type="GO" id="GO:0000139">
    <property type="term" value="C:Golgi membrane"/>
    <property type="evidence" value="ECO:0000250"/>
    <property type="project" value="UniProtKB"/>
</dbReference>
<dbReference type="GO" id="GO:0015297">
    <property type="term" value="F:antiporter activity"/>
    <property type="evidence" value="ECO:0007669"/>
    <property type="project" value="UniProtKB-KW"/>
</dbReference>
<dbReference type="GO" id="GO:0005459">
    <property type="term" value="F:UDP-galactose transmembrane transporter activity"/>
    <property type="evidence" value="ECO:0000318"/>
    <property type="project" value="GO_Central"/>
</dbReference>
<dbReference type="GO" id="GO:0055085">
    <property type="term" value="P:transmembrane transport"/>
    <property type="evidence" value="ECO:0000318"/>
    <property type="project" value="GO_Central"/>
</dbReference>
<dbReference type="GO" id="GO:1990569">
    <property type="term" value="P:UDP-N-acetylglucosamine transmembrane transport"/>
    <property type="evidence" value="ECO:0000250"/>
    <property type="project" value="UniProtKB"/>
</dbReference>
<dbReference type="InterPro" id="IPR007271">
    <property type="entry name" value="Nuc_sug_transpt"/>
</dbReference>
<dbReference type="NCBIfam" id="TIGR00803">
    <property type="entry name" value="nst"/>
    <property type="match status" value="1"/>
</dbReference>
<dbReference type="PANTHER" id="PTHR10231">
    <property type="entry name" value="NUCLEOTIDE-SUGAR TRANSMEMBRANE TRANSPORTER"/>
    <property type="match status" value="1"/>
</dbReference>
<dbReference type="Pfam" id="PF04142">
    <property type="entry name" value="Nuc_sug_transp"/>
    <property type="match status" value="1"/>
</dbReference>
<dbReference type="PIRSF" id="PIRSF005799">
    <property type="entry name" value="UDP-gal_transpt"/>
    <property type="match status" value="1"/>
</dbReference>
<dbReference type="SUPFAM" id="SSF103481">
    <property type="entry name" value="Multidrug resistance efflux transporter EmrE"/>
    <property type="match status" value="1"/>
</dbReference>
<comment type="function">
    <text evidence="1 3">Transports diphosphate-N-acetylglucosamine (UDP-GlcNAc) from the cytosol into the lumen of the Golgi apparatus, functioning as an antiporter that exchanges UDP-N-acetyl-alpha-D-glucosamine for UMP (By similarity). May supply UDP-GlcNAc as substrate for Golgi-resident glycosyltransferases that generate highly branched, multiantennary complex N-glycans and keratan sulfate (PubMed:16344554). However, the exact role of SLC35A3 still needs to be elucidated, it could be a member of a catalytically more efficient multiprotein complex rather than function independently as a single transporter (By similarity).</text>
</comment>
<comment type="catalytic activity">
    <reaction evidence="1">
        <text>UMP(out) + UDP-N-acetyl-alpha-D-glucosamine(in) = UMP(in) + UDP-N-acetyl-alpha-D-glucosamine(out)</text>
        <dbReference type="Rhea" id="RHEA:72695"/>
        <dbReference type="ChEBI" id="CHEBI:57705"/>
        <dbReference type="ChEBI" id="CHEBI:57865"/>
    </reaction>
</comment>
<comment type="subunit">
    <text evidence="1">Interacts with SLC35A2; the interaction is reduced in the presence of SLC35A4. Found in a complex with SLC35A2 and SLC35A4. Interacts with MGAT4B.</text>
</comment>
<comment type="subcellular location">
    <subcellularLocation>
        <location evidence="1">Golgi apparatus membrane</location>
        <topology evidence="2">Multi-pass membrane protein</topology>
    </subcellularLocation>
</comment>
<comment type="PTM">
    <text evidence="1">O-Glcnacylation regulates the stability of SLC35A3 and the specific complex formation with MGAT4B.</text>
</comment>
<comment type="disease">
    <text evidence="3">Defects in SLC35A3 may be cause of complex vertebral malformation (CVM) in Holstein.</text>
</comment>
<comment type="similarity">
    <text evidence="4">Belongs to the nucleotide-sugar transporter family. SLC35A subfamily.</text>
</comment>